<accession>Q67P59</accession>
<reference key="1">
    <citation type="journal article" date="2004" name="Nucleic Acids Res.">
        <title>Genome sequence of Symbiobacterium thermophilum, an uncultivable bacterium that depends on microbial commensalism.</title>
        <authorList>
            <person name="Ueda K."/>
            <person name="Yamashita A."/>
            <person name="Ishikawa J."/>
            <person name="Shimada M."/>
            <person name="Watsuji T."/>
            <person name="Morimura K."/>
            <person name="Ikeda H."/>
            <person name="Hattori M."/>
            <person name="Beppu T."/>
        </authorList>
    </citation>
    <scope>NUCLEOTIDE SEQUENCE [LARGE SCALE GENOMIC DNA]</scope>
    <source>
        <strain>DSM 24528 / JCM 14929 / IAM 14863 / T</strain>
    </source>
</reference>
<organism>
    <name type="scientific">Symbiobacterium thermophilum (strain DSM 24528 / JCM 14929 / IAM 14863 / T)</name>
    <dbReference type="NCBI Taxonomy" id="292459"/>
    <lineage>
        <taxon>Bacteria</taxon>
        <taxon>Bacillati</taxon>
        <taxon>Bacillota</taxon>
        <taxon>Clostridia</taxon>
        <taxon>Eubacteriales</taxon>
        <taxon>Symbiobacteriaceae</taxon>
        <taxon>Symbiobacterium</taxon>
    </lineage>
</organism>
<keyword id="KW-0028">Amino-acid biosynthesis</keyword>
<keyword id="KW-0963">Cytoplasm</keyword>
<keyword id="KW-0220">Diaminopimelate biosynthesis</keyword>
<keyword id="KW-0456">Lyase</keyword>
<keyword id="KW-0457">Lysine biosynthesis</keyword>
<keyword id="KW-1185">Reference proteome</keyword>
<keyword id="KW-0704">Schiff base</keyword>
<proteinExistence type="inferred from homology"/>
<dbReference type="EC" id="4.3.3.7" evidence="1"/>
<dbReference type="EMBL" id="AP006840">
    <property type="protein sequence ID" value="BAD40534.1"/>
    <property type="molecule type" value="Genomic_DNA"/>
</dbReference>
<dbReference type="RefSeq" id="WP_011195679.1">
    <property type="nucleotide sequence ID" value="NC_006177.1"/>
</dbReference>
<dbReference type="SMR" id="Q67P59"/>
<dbReference type="STRING" id="292459.STH1549"/>
<dbReference type="KEGG" id="sth:STH1549"/>
<dbReference type="eggNOG" id="COG0329">
    <property type="taxonomic scope" value="Bacteria"/>
</dbReference>
<dbReference type="HOGENOM" id="CLU_049343_7_1_9"/>
<dbReference type="OrthoDB" id="9782828at2"/>
<dbReference type="UniPathway" id="UPA00034">
    <property type="reaction ID" value="UER00017"/>
</dbReference>
<dbReference type="Proteomes" id="UP000000417">
    <property type="component" value="Chromosome"/>
</dbReference>
<dbReference type="GO" id="GO:0005829">
    <property type="term" value="C:cytosol"/>
    <property type="evidence" value="ECO:0007669"/>
    <property type="project" value="TreeGrafter"/>
</dbReference>
<dbReference type="GO" id="GO:0008840">
    <property type="term" value="F:4-hydroxy-tetrahydrodipicolinate synthase activity"/>
    <property type="evidence" value="ECO:0007669"/>
    <property type="project" value="UniProtKB-UniRule"/>
</dbReference>
<dbReference type="GO" id="GO:0019877">
    <property type="term" value="P:diaminopimelate biosynthetic process"/>
    <property type="evidence" value="ECO:0007669"/>
    <property type="project" value="UniProtKB-UniRule"/>
</dbReference>
<dbReference type="GO" id="GO:0009089">
    <property type="term" value="P:lysine biosynthetic process via diaminopimelate"/>
    <property type="evidence" value="ECO:0007669"/>
    <property type="project" value="UniProtKB-UniRule"/>
</dbReference>
<dbReference type="CDD" id="cd00950">
    <property type="entry name" value="DHDPS"/>
    <property type="match status" value="1"/>
</dbReference>
<dbReference type="Gene3D" id="3.20.20.70">
    <property type="entry name" value="Aldolase class I"/>
    <property type="match status" value="1"/>
</dbReference>
<dbReference type="HAMAP" id="MF_00418">
    <property type="entry name" value="DapA"/>
    <property type="match status" value="1"/>
</dbReference>
<dbReference type="InterPro" id="IPR013785">
    <property type="entry name" value="Aldolase_TIM"/>
</dbReference>
<dbReference type="InterPro" id="IPR005263">
    <property type="entry name" value="DapA"/>
</dbReference>
<dbReference type="InterPro" id="IPR002220">
    <property type="entry name" value="DapA-like"/>
</dbReference>
<dbReference type="InterPro" id="IPR020625">
    <property type="entry name" value="Schiff_base-form_aldolases_AS"/>
</dbReference>
<dbReference type="InterPro" id="IPR020624">
    <property type="entry name" value="Schiff_base-form_aldolases_CS"/>
</dbReference>
<dbReference type="NCBIfam" id="TIGR00674">
    <property type="entry name" value="dapA"/>
    <property type="match status" value="1"/>
</dbReference>
<dbReference type="PANTHER" id="PTHR12128:SF66">
    <property type="entry name" value="4-HYDROXY-2-OXOGLUTARATE ALDOLASE, MITOCHONDRIAL"/>
    <property type="match status" value="1"/>
</dbReference>
<dbReference type="PANTHER" id="PTHR12128">
    <property type="entry name" value="DIHYDRODIPICOLINATE SYNTHASE"/>
    <property type="match status" value="1"/>
</dbReference>
<dbReference type="Pfam" id="PF00701">
    <property type="entry name" value="DHDPS"/>
    <property type="match status" value="1"/>
</dbReference>
<dbReference type="PIRSF" id="PIRSF001365">
    <property type="entry name" value="DHDPS"/>
    <property type="match status" value="1"/>
</dbReference>
<dbReference type="PRINTS" id="PR00146">
    <property type="entry name" value="DHPICSNTHASE"/>
</dbReference>
<dbReference type="SMART" id="SM01130">
    <property type="entry name" value="DHDPS"/>
    <property type="match status" value="1"/>
</dbReference>
<dbReference type="SUPFAM" id="SSF51569">
    <property type="entry name" value="Aldolase"/>
    <property type="match status" value="1"/>
</dbReference>
<dbReference type="PROSITE" id="PS00665">
    <property type="entry name" value="DHDPS_1"/>
    <property type="match status" value="1"/>
</dbReference>
<dbReference type="PROSITE" id="PS00666">
    <property type="entry name" value="DHDPS_2"/>
    <property type="match status" value="1"/>
</dbReference>
<name>DAPA_SYMTH</name>
<sequence length="293" mass="31202">MPTFGRLLTAMVTPMTPDGAVDYQRAGELAKHLVAAGSEGLVVSGTTGESPTLSHEEKLRLFETVVDAVGGQVSVIAGTGSNNTAESIRFSREAARTGVHGLLLVTPYYNKPPQEGLYRHFRAVAEAVDLPCILYNVPSRTSVNMLPATTLRLARDVPNIVGIKECADVGQLADILSGAPEGFRVWSGDDANLLPYLTVGAYGIISVASHVVGPQMRELIDAFLAGDTARAAAWHRRLLPVFRGLFAVTNPILVKAALRLTGFPVGPVRLPLVDATEEQEEALREVLAEAGVL</sequence>
<comment type="function">
    <text evidence="1">Catalyzes the condensation of (S)-aspartate-beta-semialdehyde [(S)-ASA] and pyruvate to 4-hydroxy-tetrahydrodipicolinate (HTPA).</text>
</comment>
<comment type="catalytic activity">
    <reaction evidence="1">
        <text>L-aspartate 4-semialdehyde + pyruvate = (2S,4S)-4-hydroxy-2,3,4,5-tetrahydrodipicolinate + H2O + H(+)</text>
        <dbReference type="Rhea" id="RHEA:34171"/>
        <dbReference type="ChEBI" id="CHEBI:15361"/>
        <dbReference type="ChEBI" id="CHEBI:15377"/>
        <dbReference type="ChEBI" id="CHEBI:15378"/>
        <dbReference type="ChEBI" id="CHEBI:67139"/>
        <dbReference type="ChEBI" id="CHEBI:537519"/>
        <dbReference type="EC" id="4.3.3.7"/>
    </reaction>
</comment>
<comment type="pathway">
    <text evidence="1">Amino-acid biosynthesis; L-lysine biosynthesis via DAP pathway; (S)-tetrahydrodipicolinate from L-aspartate: step 3/4.</text>
</comment>
<comment type="subunit">
    <text evidence="1">Homotetramer; dimer of dimers.</text>
</comment>
<comment type="subcellular location">
    <subcellularLocation>
        <location evidence="1">Cytoplasm</location>
    </subcellularLocation>
</comment>
<comment type="similarity">
    <text evidence="1">Belongs to the DapA family.</text>
</comment>
<comment type="caution">
    <text evidence="2">Was originally thought to be a dihydrodipicolinate synthase (DHDPS), catalyzing the condensation of (S)-aspartate-beta-semialdehyde [(S)-ASA] and pyruvate to dihydrodipicolinate (DHDP). However, it was shown in E.coli that the product of the enzymatic reaction is not dihydrodipicolinate but in fact (4S)-4-hydroxy-2,3,4,5-tetrahydro-(2S)-dipicolinic acid (HTPA), and that the consecutive dehydration reaction leading to DHDP is not spontaneous but catalyzed by DapB.</text>
</comment>
<feature type="chain" id="PRO_0000103170" description="4-hydroxy-tetrahydrodipicolinate synthase">
    <location>
        <begin position="1"/>
        <end position="293"/>
    </location>
</feature>
<feature type="active site" description="Proton donor/acceptor" evidence="1">
    <location>
        <position position="135"/>
    </location>
</feature>
<feature type="active site" description="Schiff-base intermediate with substrate" evidence="1">
    <location>
        <position position="164"/>
    </location>
</feature>
<feature type="binding site" evidence="1">
    <location>
        <position position="47"/>
    </location>
    <ligand>
        <name>pyruvate</name>
        <dbReference type="ChEBI" id="CHEBI:15361"/>
    </ligand>
</feature>
<feature type="binding site" evidence="1">
    <location>
        <position position="205"/>
    </location>
    <ligand>
        <name>pyruvate</name>
        <dbReference type="ChEBI" id="CHEBI:15361"/>
    </ligand>
</feature>
<feature type="site" description="Part of a proton relay during catalysis" evidence="1">
    <location>
        <position position="46"/>
    </location>
</feature>
<feature type="site" description="Part of a proton relay during catalysis" evidence="1">
    <location>
        <position position="109"/>
    </location>
</feature>
<evidence type="ECO:0000255" key="1">
    <source>
        <dbReference type="HAMAP-Rule" id="MF_00418"/>
    </source>
</evidence>
<evidence type="ECO:0000305" key="2"/>
<gene>
    <name evidence="1" type="primary">dapA</name>
    <name type="ordered locus">STH1549</name>
</gene>
<protein>
    <recommendedName>
        <fullName evidence="1">4-hydroxy-tetrahydrodipicolinate synthase</fullName>
        <shortName evidence="1">HTPA synthase</shortName>
        <ecNumber evidence="1">4.3.3.7</ecNumber>
    </recommendedName>
</protein>